<gene>
    <name evidence="1" type="primary">rplA</name>
    <name evidence="1" type="synonym">rpl1</name>
    <name type="ordered locus">PCC8801_1739</name>
</gene>
<keyword id="KW-1185">Reference proteome</keyword>
<keyword id="KW-0678">Repressor</keyword>
<keyword id="KW-0687">Ribonucleoprotein</keyword>
<keyword id="KW-0689">Ribosomal protein</keyword>
<keyword id="KW-0694">RNA-binding</keyword>
<keyword id="KW-0699">rRNA-binding</keyword>
<keyword id="KW-0810">Translation regulation</keyword>
<keyword id="KW-0820">tRNA-binding</keyword>
<evidence type="ECO:0000255" key="1">
    <source>
        <dbReference type="HAMAP-Rule" id="MF_01318"/>
    </source>
</evidence>
<evidence type="ECO:0000305" key="2"/>
<comment type="function">
    <text evidence="1">Binds directly to 23S rRNA. The L1 stalk is quite mobile in the ribosome, and is involved in E site tRNA release.</text>
</comment>
<comment type="function">
    <text evidence="1">Protein L1 is also a translational repressor protein, it controls the translation of the L11 operon by binding to its mRNA.</text>
</comment>
<comment type="subunit">
    <text evidence="1">Part of the 50S ribosomal subunit.</text>
</comment>
<comment type="similarity">
    <text evidence="1">Belongs to the universal ribosomal protein uL1 family.</text>
</comment>
<proteinExistence type="inferred from homology"/>
<accession>B7JWT7</accession>
<reference key="1">
    <citation type="journal article" date="2011" name="MBio">
        <title>Novel metabolic attributes of the genus Cyanothece, comprising a group of unicellular nitrogen-fixing Cyanobacteria.</title>
        <authorList>
            <person name="Bandyopadhyay A."/>
            <person name="Elvitigala T."/>
            <person name="Welsh E."/>
            <person name="Stockel J."/>
            <person name="Liberton M."/>
            <person name="Min H."/>
            <person name="Sherman L.A."/>
            <person name="Pakrasi H.B."/>
        </authorList>
    </citation>
    <scope>NUCLEOTIDE SEQUENCE [LARGE SCALE GENOMIC DNA]</scope>
    <source>
        <strain>PCC 8801 / RF-1</strain>
    </source>
</reference>
<feature type="chain" id="PRO_1000141388" description="Large ribosomal subunit protein uL1">
    <location>
        <begin position="1"/>
        <end position="238"/>
    </location>
</feature>
<organism>
    <name type="scientific">Rippkaea orientalis (strain PCC 8801 / RF-1)</name>
    <name type="common">Cyanothece sp. (strain PCC 8801)</name>
    <dbReference type="NCBI Taxonomy" id="41431"/>
    <lineage>
        <taxon>Bacteria</taxon>
        <taxon>Bacillati</taxon>
        <taxon>Cyanobacteriota</taxon>
        <taxon>Cyanophyceae</taxon>
        <taxon>Oscillatoriophycideae</taxon>
        <taxon>Chroococcales</taxon>
        <taxon>Aphanothecaceae</taxon>
        <taxon>Rippkaea</taxon>
        <taxon>Rippkaea orientalis</taxon>
    </lineage>
</organism>
<dbReference type="EMBL" id="CP001287">
    <property type="protein sequence ID" value="ACK65786.1"/>
    <property type="molecule type" value="Genomic_DNA"/>
</dbReference>
<dbReference type="RefSeq" id="WP_012595059.1">
    <property type="nucleotide sequence ID" value="NC_011726.1"/>
</dbReference>
<dbReference type="SMR" id="B7JWT7"/>
<dbReference type="STRING" id="41431.PCC8801_1739"/>
<dbReference type="KEGG" id="cyp:PCC8801_1739"/>
<dbReference type="eggNOG" id="COG0081">
    <property type="taxonomic scope" value="Bacteria"/>
</dbReference>
<dbReference type="HOGENOM" id="CLU_062853_0_0_3"/>
<dbReference type="OrthoDB" id="9803740at2"/>
<dbReference type="Proteomes" id="UP000008204">
    <property type="component" value="Chromosome"/>
</dbReference>
<dbReference type="GO" id="GO:0015934">
    <property type="term" value="C:large ribosomal subunit"/>
    <property type="evidence" value="ECO:0007669"/>
    <property type="project" value="InterPro"/>
</dbReference>
<dbReference type="GO" id="GO:0019843">
    <property type="term" value="F:rRNA binding"/>
    <property type="evidence" value="ECO:0007669"/>
    <property type="project" value="UniProtKB-UniRule"/>
</dbReference>
<dbReference type="GO" id="GO:0003735">
    <property type="term" value="F:structural constituent of ribosome"/>
    <property type="evidence" value="ECO:0007669"/>
    <property type="project" value="InterPro"/>
</dbReference>
<dbReference type="GO" id="GO:0000049">
    <property type="term" value="F:tRNA binding"/>
    <property type="evidence" value="ECO:0007669"/>
    <property type="project" value="UniProtKB-KW"/>
</dbReference>
<dbReference type="GO" id="GO:0006417">
    <property type="term" value="P:regulation of translation"/>
    <property type="evidence" value="ECO:0007669"/>
    <property type="project" value="UniProtKB-KW"/>
</dbReference>
<dbReference type="GO" id="GO:0006412">
    <property type="term" value="P:translation"/>
    <property type="evidence" value="ECO:0007669"/>
    <property type="project" value="UniProtKB-UniRule"/>
</dbReference>
<dbReference type="CDD" id="cd00403">
    <property type="entry name" value="Ribosomal_L1"/>
    <property type="match status" value="1"/>
</dbReference>
<dbReference type="FunFam" id="3.40.50.790:FF:000001">
    <property type="entry name" value="50S ribosomal protein L1"/>
    <property type="match status" value="1"/>
</dbReference>
<dbReference type="Gene3D" id="3.30.190.20">
    <property type="match status" value="1"/>
</dbReference>
<dbReference type="Gene3D" id="3.40.50.790">
    <property type="match status" value="1"/>
</dbReference>
<dbReference type="HAMAP" id="MF_01318_B">
    <property type="entry name" value="Ribosomal_uL1_B"/>
    <property type="match status" value="1"/>
</dbReference>
<dbReference type="InterPro" id="IPR005878">
    <property type="entry name" value="Ribosom_uL1_bac-type"/>
</dbReference>
<dbReference type="InterPro" id="IPR002143">
    <property type="entry name" value="Ribosomal_uL1"/>
</dbReference>
<dbReference type="InterPro" id="IPR023674">
    <property type="entry name" value="Ribosomal_uL1-like"/>
</dbReference>
<dbReference type="InterPro" id="IPR028364">
    <property type="entry name" value="Ribosomal_uL1/biogenesis"/>
</dbReference>
<dbReference type="InterPro" id="IPR016095">
    <property type="entry name" value="Ribosomal_uL1_3-a/b-sand"/>
</dbReference>
<dbReference type="InterPro" id="IPR023673">
    <property type="entry name" value="Ribosomal_uL1_CS"/>
</dbReference>
<dbReference type="NCBIfam" id="TIGR01169">
    <property type="entry name" value="rplA_bact"/>
    <property type="match status" value="1"/>
</dbReference>
<dbReference type="PANTHER" id="PTHR36427">
    <property type="entry name" value="54S RIBOSOMAL PROTEIN L1, MITOCHONDRIAL"/>
    <property type="match status" value="1"/>
</dbReference>
<dbReference type="PANTHER" id="PTHR36427:SF3">
    <property type="entry name" value="LARGE RIBOSOMAL SUBUNIT PROTEIN UL1M"/>
    <property type="match status" value="1"/>
</dbReference>
<dbReference type="Pfam" id="PF00687">
    <property type="entry name" value="Ribosomal_L1"/>
    <property type="match status" value="1"/>
</dbReference>
<dbReference type="PIRSF" id="PIRSF002155">
    <property type="entry name" value="Ribosomal_L1"/>
    <property type="match status" value="1"/>
</dbReference>
<dbReference type="SUPFAM" id="SSF56808">
    <property type="entry name" value="Ribosomal protein L1"/>
    <property type="match status" value="1"/>
</dbReference>
<dbReference type="PROSITE" id="PS01199">
    <property type="entry name" value="RIBOSOMAL_L1"/>
    <property type="match status" value="1"/>
</dbReference>
<protein>
    <recommendedName>
        <fullName evidence="1">Large ribosomal subunit protein uL1</fullName>
    </recommendedName>
    <alternativeName>
        <fullName evidence="2">50S ribosomal protein L1</fullName>
    </alternativeName>
</protein>
<name>RL1_RIPO1</name>
<sequence>MPKKLSKRFKEALAKVDQNQTYAPLEALQLLKETATAKFNESAEAHIRLGIDPKYTDQQLRTTVSLPKGTGQEVRVAVIARGEKVQEANNAGADIVGSEELIEEIFKGMMDFEVLIATPDMMPKVAKLGRLLGPRGLMPSPKGGTVTADLTNAITEFKAGKLEFRADRTGIVHVMFGKASFTPEDLLANLKALQETVDRNRPSGAKGRYWRSVFVSASMGPSIAVDINALRDLKLTEV</sequence>